<feature type="chain" id="PRO_0000273986" description="Fatty acid oxidation complex subunit alpha">
    <location>
        <begin position="1"/>
        <end position="709"/>
    </location>
</feature>
<feature type="region of interest" description="Enoyl-CoA hydratase" evidence="1">
    <location>
        <begin position="1"/>
        <end position="188"/>
    </location>
</feature>
<feature type="region of interest" description="3-hydroxyacyl-CoA dehydrogenase" evidence="1">
    <location>
        <begin position="308"/>
        <end position="709"/>
    </location>
</feature>
<feature type="site" description="Important for catalytic activity" evidence="1">
    <location>
        <position position="116"/>
    </location>
</feature>
<feature type="site" description="Important for catalytic activity" evidence="1">
    <location>
        <position position="138"/>
    </location>
</feature>
<comment type="function">
    <text evidence="1">Catalyzes the formation of a hydroxyacyl-CoA by addition of water on enoyl-CoA. Also exhibits 3-hydroxyacyl-CoA epimerase and 3-hydroxyacyl-CoA dehydrogenase activities.</text>
</comment>
<comment type="catalytic activity">
    <reaction evidence="1">
        <text>a (3S)-3-hydroxyacyl-CoA = a (2E)-enoyl-CoA + H2O</text>
        <dbReference type="Rhea" id="RHEA:16105"/>
        <dbReference type="ChEBI" id="CHEBI:15377"/>
        <dbReference type="ChEBI" id="CHEBI:57318"/>
        <dbReference type="ChEBI" id="CHEBI:58856"/>
        <dbReference type="EC" id="4.2.1.17"/>
    </reaction>
</comment>
<comment type="catalytic activity">
    <reaction evidence="1">
        <text>a 4-saturated-(3S)-3-hydroxyacyl-CoA = a (3E)-enoyl-CoA + H2O</text>
        <dbReference type="Rhea" id="RHEA:20724"/>
        <dbReference type="ChEBI" id="CHEBI:15377"/>
        <dbReference type="ChEBI" id="CHEBI:58521"/>
        <dbReference type="ChEBI" id="CHEBI:137480"/>
        <dbReference type="EC" id="4.2.1.17"/>
    </reaction>
</comment>
<comment type="catalytic activity">
    <reaction evidence="1">
        <text>a (3S)-3-hydroxyacyl-CoA + NAD(+) = a 3-oxoacyl-CoA + NADH + H(+)</text>
        <dbReference type="Rhea" id="RHEA:22432"/>
        <dbReference type="ChEBI" id="CHEBI:15378"/>
        <dbReference type="ChEBI" id="CHEBI:57318"/>
        <dbReference type="ChEBI" id="CHEBI:57540"/>
        <dbReference type="ChEBI" id="CHEBI:57945"/>
        <dbReference type="ChEBI" id="CHEBI:90726"/>
        <dbReference type="EC" id="1.1.1.35"/>
    </reaction>
</comment>
<comment type="catalytic activity">
    <reaction evidence="1">
        <text>(3S)-3-hydroxybutanoyl-CoA = (3R)-3-hydroxybutanoyl-CoA</text>
        <dbReference type="Rhea" id="RHEA:21760"/>
        <dbReference type="ChEBI" id="CHEBI:57315"/>
        <dbReference type="ChEBI" id="CHEBI:57316"/>
        <dbReference type="EC" id="5.1.2.3"/>
    </reaction>
</comment>
<comment type="pathway">
    <text evidence="1">Lipid metabolism; fatty acid beta-oxidation.</text>
</comment>
<comment type="subunit">
    <text evidence="1">Heterotetramer of two alpha chains (FadJ) and two beta chains (FadI).</text>
</comment>
<comment type="subcellular location">
    <subcellularLocation>
        <location evidence="1">Cytoplasm</location>
    </subcellularLocation>
</comment>
<comment type="similarity">
    <text evidence="1">In the N-terminal section; belongs to the enoyl-CoA hydratase/isomerase family.</text>
</comment>
<comment type="similarity">
    <text evidence="1">In the central section; belongs to the 3-hydroxyacyl-CoA dehydrogenase family.</text>
</comment>
<dbReference type="EC" id="4.2.1.17" evidence="1"/>
<dbReference type="EC" id="5.1.2.3" evidence="1"/>
<dbReference type="EC" id="1.1.1.35" evidence="1"/>
<dbReference type="EMBL" id="CP000444">
    <property type="protein sequence ID" value="ABI42472.1"/>
    <property type="molecule type" value="Genomic_DNA"/>
</dbReference>
<dbReference type="SMR" id="Q0HWN3"/>
<dbReference type="KEGG" id="shm:Shewmr7_1473"/>
<dbReference type="HOGENOM" id="CLU_009834_16_3_6"/>
<dbReference type="UniPathway" id="UPA00659"/>
<dbReference type="GO" id="GO:0005737">
    <property type="term" value="C:cytoplasm"/>
    <property type="evidence" value="ECO:0007669"/>
    <property type="project" value="UniProtKB-SubCell"/>
</dbReference>
<dbReference type="GO" id="GO:0008692">
    <property type="term" value="F:3-hydroxybutyryl-CoA epimerase activity"/>
    <property type="evidence" value="ECO:0007669"/>
    <property type="project" value="UniProtKB-UniRule"/>
</dbReference>
<dbReference type="GO" id="GO:0004300">
    <property type="term" value="F:enoyl-CoA hydratase activity"/>
    <property type="evidence" value="ECO:0007669"/>
    <property type="project" value="UniProtKB-UniRule"/>
</dbReference>
<dbReference type="GO" id="GO:0016509">
    <property type="term" value="F:long-chain-3-hydroxyacyl-CoA dehydrogenase activity"/>
    <property type="evidence" value="ECO:0007669"/>
    <property type="project" value="TreeGrafter"/>
</dbReference>
<dbReference type="GO" id="GO:0070403">
    <property type="term" value="F:NAD+ binding"/>
    <property type="evidence" value="ECO:0007669"/>
    <property type="project" value="InterPro"/>
</dbReference>
<dbReference type="GO" id="GO:0006635">
    <property type="term" value="P:fatty acid beta-oxidation"/>
    <property type="evidence" value="ECO:0007669"/>
    <property type="project" value="UniProtKB-UniRule"/>
</dbReference>
<dbReference type="CDD" id="cd06558">
    <property type="entry name" value="crotonase-like"/>
    <property type="match status" value="1"/>
</dbReference>
<dbReference type="FunFam" id="3.90.226.10:FF:000011">
    <property type="entry name" value="Fatty acid oxidation complex subunit alpha"/>
    <property type="match status" value="1"/>
</dbReference>
<dbReference type="FunFam" id="3.40.50.720:FF:000009">
    <property type="entry name" value="Fatty oxidation complex, alpha subunit"/>
    <property type="match status" value="1"/>
</dbReference>
<dbReference type="Gene3D" id="1.10.1040.50">
    <property type="match status" value="1"/>
</dbReference>
<dbReference type="Gene3D" id="3.90.226.10">
    <property type="entry name" value="2-enoyl-CoA Hydratase, Chain A, domain 1"/>
    <property type="match status" value="1"/>
</dbReference>
<dbReference type="Gene3D" id="3.40.50.720">
    <property type="entry name" value="NAD(P)-binding Rossmann-like Domain"/>
    <property type="match status" value="1"/>
</dbReference>
<dbReference type="HAMAP" id="MF_01617">
    <property type="entry name" value="FadJ"/>
    <property type="match status" value="1"/>
</dbReference>
<dbReference type="InterPro" id="IPR006176">
    <property type="entry name" value="3-OHacyl-CoA_DH_NAD-bd"/>
</dbReference>
<dbReference type="InterPro" id="IPR006108">
    <property type="entry name" value="3HC_DH_C"/>
</dbReference>
<dbReference type="InterPro" id="IPR008927">
    <property type="entry name" value="6-PGluconate_DH-like_C_sf"/>
</dbReference>
<dbReference type="InterPro" id="IPR029045">
    <property type="entry name" value="ClpP/crotonase-like_dom_sf"/>
</dbReference>
<dbReference type="InterPro" id="IPR001753">
    <property type="entry name" value="Enoyl-CoA_hydra/iso"/>
</dbReference>
<dbReference type="InterPro" id="IPR050136">
    <property type="entry name" value="FA_oxidation_alpha_subunit"/>
</dbReference>
<dbReference type="InterPro" id="IPR012802">
    <property type="entry name" value="FadJ"/>
</dbReference>
<dbReference type="InterPro" id="IPR036291">
    <property type="entry name" value="NAD(P)-bd_dom_sf"/>
</dbReference>
<dbReference type="NCBIfam" id="TIGR02440">
    <property type="entry name" value="FadJ"/>
    <property type="match status" value="1"/>
</dbReference>
<dbReference type="NCBIfam" id="NF008363">
    <property type="entry name" value="PRK11154.1"/>
    <property type="match status" value="1"/>
</dbReference>
<dbReference type="PANTHER" id="PTHR43612">
    <property type="entry name" value="TRIFUNCTIONAL ENZYME SUBUNIT ALPHA"/>
    <property type="match status" value="1"/>
</dbReference>
<dbReference type="PANTHER" id="PTHR43612:SF3">
    <property type="entry name" value="TRIFUNCTIONAL ENZYME SUBUNIT ALPHA, MITOCHONDRIAL"/>
    <property type="match status" value="1"/>
</dbReference>
<dbReference type="Pfam" id="PF00725">
    <property type="entry name" value="3HCDH"/>
    <property type="match status" value="2"/>
</dbReference>
<dbReference type="Pfam" id="PF02737">
    <property type="entry name" value="3HCDH_N"/>
    <property type="match status" value="1"/>
</dbReference>
<dbReference type="Pfam" id="PF00378">
    <property type="entry name" value="ECH_1"/>
    <property type="match status" value="1"/>
</dbReference>
<dbReference type="SUPFAM" id="SSF48179">
    <property type="entry name" value="6-phosphogluconate dehydrogenase C-terminal domain-like"/>
    <property type="match status" value="2"/>
</dbReference>
<dbReference type="SUPFAM" id="SSF52096">
    <property type="entry name" value="ClpP/crotonase"/>
    <property type="match status" value="1"/>
</dbReference>
<dbReference type="SUPFAM" id="SSF51735">
    <property type="entry name" value="NAD(P)-binding Rossmann-fold domains"/>
    <property type="match status" value="1"/>
</dbReference>
<evidence type="ECO:0000255" key="1">
    <source>
        <dbReference type="HAMAP-Rule" id="MF_01617"/>
    </source>
</evidence>
<proteinExistence type="inferred from homology"/>
<keyword id="KW-0963">Cytoplasm</keyword>
<keyword id="KW-0276">Fatty acid metabolism</keyword>
<keyword id="KW-0413">Isomerase</keyword>
<keyword id="KW-0442">Lipid degradation</keyword>
<keyword id="KW-0443">Lipid metabolism</keyword>
<keyword id="KW-0456">Lyase</keyword>
<keyword id="KW-0511">Multifunctional enzyme</keyword>
<keyword id="KW-0520">NAD</keyword>
<keyword id="KW-0560">Oxidoreductase</keyword>
<protein>
    <recommendedName>
        <fullName evidence="1">Fatty acid oxidation complex subunit alpha</fullName>
    </recommendedName>
    <domain>
        <recommendedName>
            <fullName evidence="1">Enoyl-CoA hydratase/3-hydroxybutyryl-CoA epimerase</fullName>
            <ecNumber evidence="1">4.2.1.17</ecNumber>
            <ecNumber evidence="1">5.1.2.3</ecNumber>
        </recommendedName>
    </domain>
    <domain>
        <recommendedName>
            <fullName evidence="1">3-hydroxyacyl-CoA dehydrogenase</fullName>
            <ecNumber evidence="1">1.1.1.35</ecNumber>
        </recommendedName>
    </domain>
</protein>
<gene>
    <name evidence="1" type="primary">fadJ</name>
    <name type="ordered locus">Shewmr7_1473</name>
</gene>
<reference key="1">
    <citation type="submission" date="2006-08" db="EMBL/GenBank/DDBJ databases">
        <title>Complete sequence of chromosome 1 of Shewanella sp. MR-7.</title>
        <authorList>
            <person name="Copeland A."/>
            <person name="Lucas S."/>
            <person name="Lapidus A."/>
            <person name="Barry K."/>
            <person name="Detter J.C."/>
            <person name="Glavina del Rio T."/>
            <person name="Hammon N."/>
            <person name="Israni S."/>
            <person name="Dalin E."/>
            <person name="Tice H."/>
            <person name="Pitluck S."/>
            <person name="Kiss H."/>
            <person name="Brettin T."/>
            <person name="Bruce D."/>
            <person name="Han C."/>
            <person name="Tapia R."/>
            <person name="Gilna P."/>
            <person name="Schmutz J."/>
            <person name="Larimer F."/>
            <person name="Land M."/>
            <person name="Hauser L."/>
            <person name="Kyrpides N."/>
            <person name="Mikhailova N."/>
            <person name="Nealson K."/>
            <person name="Konstantinidis K."/>
            <person name="Klappenbach J."/>
            <person name="Tiedje J."/>
            <person name="Richardson P."/>
        </authorList>
    </citation>
    <scope>NUCLEOTIDE SEQUENCE [LARGE SCALE GENOMIC DNA]</scope>
    <source>
        <strain>MR-7</strain>
    </source>
</reference>
<name>FADJ_SHESR</name>
<organism>
    <name type="scientific">Shewanella sp. (strain MR-7)</name>
    <dbReference type="NCBI Taxonomy" id="60481"/>
    <lineage>
        <taxon>Bacteria</taxon>
        <taxon>Pseudomonadati</taxon>
        <taxon>Pseudomonadota</taxon>
        <taxon>Gammaproteobacteria</taxon>
        <taxon>Alteromonadales</taxon>
        <taxon>Shewanellaceae</taxon>
        <taxon>Shewanella</taxon>
    </lineage>
</organism>
<accession>Q0HWN3</accession>
<sequence length="709" mass="76307">MEKTFNLTRREDGIAILTMDVPGETMNTLKAEFGPEISEILSEIKRDSSIRGLVLISGKKDSFVAGADISMLDACQTAGDAKALSQQGHVVFNELEALNIPVVAAIHGACLGGGLELALACHQRVCSDDGKTMLGVPEVQLGLLPGGGGTQRLPRLVGITTALDMMLTGKQIRPKQALKMGLVNDVVPQTILLQTAVEMALAGKRTAKPVKKSLVNQLLEGTGFGRNIIFDQAAKQVAKKTQGNYPAPAKIIDCVRQGMAKGMQKGLEVEASHFAELVVSKESEALRSIFFATTEMKKETGAEGATPRKVKKAVILGGGLMGGGIASVTTTKAKIPARVKDINEKGLSNALSYAYKLLDKGVKRRHMTPAVRDNLMALMTTTTEYKGVKDADIVVEAVFEDLALKHQMVKDIERECGEHTIFASNTSSLPIGQIAQAASRPENVIGLHYFSPVEKMPLVEVIAHAKTSPETIATTVAFARKQGKTPIVVQDGAGFYVNRILALYMNEAAQLLLEGQSIEHLDKALVKFGFPVGPITLLDEVGIDVGAKIAPILETELGERFKAPAAFDKLLSDDRKGRKNGKGFYQYAAGNKASSKKKVVDESVYGVLGIKPGIDKEMSAVAERCVVQMLNEAVRCLDDGIIASPRDGDIGAIFGIGFPPFLGGPFHYIDTLGADNLVKILERYQAQYGDRFEPCPRLKEMAAEKTRFF</sequence>